<accession>Q0G9X1</accession>
<evidence type="ECO:0000255" key="1">
    <source>
        <dbReference type="HAMAP-Rule" id="MF_01323"/>
    </source>
</evidence>
<evidence type="ECO:0000305" key="2"/>
<proteinExistence type="inferred from homology"/>
<geneLocation type="chloroplast"/>
<organism>
    <name type="scientific">Daucus carota</name>
    <name type="common">Wild carrot</name>
    <dbReference type="NCBI Taxonomy" id="4039"/>
    <lineage>
        <taxon>Eukaryota</taxon>
        <taxon>Viridiplantae</taxon>
        <taxon>Streptophyta</taxon>
        <taxon>Embryophyta</taxon>
        <taxon>Tracheophyta</taxon>
        <taxon>Spermatophyta</taxon>
        <taxon>Magnoliopsida</taxon>
        <taxon>eudicotyledons</taxon>
        <taxon>Gunneridae</taxon>
        <taxon>Pentapetalae</taxon>
        <taxon>asterids</taxon>
        <taxon>campanulids</taxon>
        <taxon>Apiales</taxon>
        <taxon>Apiaceae</taxon>
        <taxon>Apioideae</taxon>
        <taxon>Scandiceae</taxon>
        <taxon>Daucinae</taxon>
        <taxon>Daucus</taxon>
        <taxon>Daucus sect. Daucus</taxon>
    </lineage>
</organism>
<comment type="function">
    <text evidence="1">DNA-dependent RNA polymerase catalyzes the transcription of DNA into RNA using the four ribonucleoside triphosphates as substrates.</text>
</comment>
<comment type="catalytic activity">
    <reaction evidence="1">
        <text>RNA(n) + a ribonucleoside 5'-triphosphate = RNA(n+1) + diphosphate</text>
        <dbReference type="Rhea" id="RHEA:21248"/>
        <dbReference type="Rhea" id="RHEA-COMP:14527"/>
        <dbReference type="Rhea" id="RHEA-COMP:17342"/>
        <dbReference type="ChEBI" id="CHEBI:33019"/>
        <dbReference type="ChEBI" id="CHEBI:61557"/>
        <dbReference type="ChEBI" id="CHEBI:140395"/>
        <dbReference type="EC" id="2.7.7.6"/>
    </reaction>
</comment>
<comment type="cofactor">
    <cofactor evidence="1">
        <name>Mg(2+)</name>
        <dbReference type="ChEBI" id="CHEBI:18420"/>
    </cofactor>
    <text evidence="1">Binds 1 Mg(2+) ion per subunit.</text>
</comment>
<comment type="cofactor">
    <cofactor evidence="1">
        <name>Zn(2+)</name>
        <dbReference type="ChEBI" id="CHEBI:29105"/>
    </cofactor>
    <text evidence="1">Binds 1 Zn(2+) ion per subunit.</text>
</comment>
<comment type="subunit">
    <text evidence="1">In plastids the minimal PEP RNA polymerase catalytic core is composed of four subunits: alpha, beta, beta', and beta''. When a (nuclear-encoded) sigma factor is associated with the core the holoenzyme is formed, which can initiate transcription.</text>
</comment>
<comment type="subcellular location">
    <subcellularLocation>
        <location evidence="1">Plastid</location>
        <location evidence="1">Chloroplast</location>
    </subcellularLocation>
</comment>
<comment type="similarity">
    <text evidence="1">Belongs to the RNA polymerase beta' chain family. RpoC1 subfamily.</text>
</comment>
<comment type="sequence caution" evidence="2">
    <conflict type="erroneous initiation">
        <sequence resource="EMBL-CDS" id="ABI32415"/>
    </conflict>
    <text>Extended N-terminus.</text>
</comment>
<protein>
    <recommendedName>
        <fullName evidence="1">DNA-directed RNA polymerase subunit beta'</fullName>
        <ecNumber evidence="1">2.7.7.6</ecNumber>
    </recommendedName>
    <alternativeName>
        <fullName evidence="1">PEP</fullName>
    </alternativeName>
    <alternativeName>
        <fullName evidence="1">Plastid-encoded RNA polymerase subunit beta'</fullName>
        <shortName evidence="1">RNA polymerase subunit beta'</shortName>
    </alternativeName>
</protein>
<name>RPOC1_DAUCA</name>
<reference key="1">
    <citation type="journal article" date="2006" name="BMC Genomics">
        <title>Complete plastid genome sequence of Daucus carota: implications for biotechnology and phylogeny of angiosperms.</title>
        <authorList>
            <person name="Ruhlman T."/>
            <person name="Lee S.-B."/>
            <person name="Jansen R.K."/>
            <person name="Hostetler J.B."/>
            <person name="Tallon L.J."/>
            <person name="Town C.D."/>
            <person name="Daniell H."/>
        </authorList>
    </citation>
    <scope>NUCLEOTIDE SEQUENCE [LARGE SCALE GENOMIC DNA]</scope>
    <source>
        <strain>cv. Danvers Half-long</strain>
    </source>
</reference>
<gene>
    <name evidence="1" type="primary">rpoC1</name>
</gene>
<feature type="chain" id="PRO_0000277165" description="DNA-directed RNA polymerase subunit beta'">
    <location>
        <begin position="1"/>
        <end position="677"/>
    </location>
</feature>
<feature type="binding site" evidence="1">
    <location>
        <position position="69"/>
    </location>
    <ligand>
        <name>Zn(2+)</name>
        <dbReference type="ChEBI" id="CHEBI:29105"/>
    </ligand>
</feature>
<feature type="binding site" evidence="1">
    <location>
        <position position="71"/>
    </location>
    <ligand>
        <name>Zn(2+)</name>
        <dbReference type="ChEBI" id="CHEBI:29105"/>
    </ligand>
</feature>
<feature type="binding site" evidence="1">
    <location>
        <position position="87"/>
    </location>
    <ligand>
        <name>Zn(2+)</name>
        <dbReference type="ChEBI" id="CHEBI:29105"/>
    </ligand>
</feature>
<feature type="binding site" evidence="1">
    <location>
        <position position="90"/>
    </location>
    <ligand>
        <name>Zn(2+)</name>
        <dbReference type="ChEBI" id="CHEBI:29105"/>
    </ligand>
</feature>
<feature type="binding site" evidence="1">
    <location>
        <position position="489"/>
    </location>
    <ligand>
        <name>Mg(2+)</name>
        <dbReference type="ChEBI" id="CHEBI:18420"/>
    </ligand>
</feature>
<feature type="binding site" evidence="1">
    <location>
        <position position="491"/>
    </location>
    <ligand>
        <name>Mg(2+)</name>
        <dbReference type="ChEBI" id="CHEBI:18420"/>
    </ligand>
</feature>
<feature type="binding site" evidence="1">
    <location>
        <position position="493"/>
    </location>
    <ligand>
        <name>Mg(2+)</name>
        <dbReference type="ChEBI" id="CHEBI:18420"/>
    </ligand>
</feature>
<sequence length="677" mass="78083">MIDQYKHQQLRIGSVSPQQISTWANKILPNGERVGEVTKPYTFHYKTNKPEKDGLFCERIFGPIKSGICACGNYRVIGDKKKDRKSCEQCGVEFVDSRIRRYQMGYIKLACPVTHVWYLKRLPSYIANLLDKPLKELEGLVYCDFSFARPIAKKPTFLRLRGLFEYEIQSWKYSIPLFFTTQGFDTFRNREISTGAGAIREQLADLDLRIIIDSSLVEWKELGEDGPTGNEWEDRKVGRRKDFLVRRMELAKHFIRTNIDPKWMVLCLLPVLPPELRPIVQIDGGKLMSSDINELYRRVIYRNNTLTDLLTTSRSTPGELIMCQEKLVQEAVDTLLDNGIRGQPMRDGHNKVYKSFSDVIEGKEGRFRETLLGKRVDYSGRSVIVVGPSLSLYQCGLPREIAIELFQTFVIRSLIRQQLASNIGVAKSKIREKKPIVWEILREVMRGHPVLLNRAPTLHRLGIQAFQPVLVEGRAICLHPLVRKGFNADFDGDQMAVHVPLSFEAQAEARLLMFSHINLLSPAIGDPISVPTQDMLIGLYVLTSGNRRGICVNRYNPSNHRNQNKRIYENNYKYTKEKEPFFCNSYDAIGAYRQKRINLDSPLWLRWRLDQRVIAAREAPLEVHYESLGTYYDIYGQYLIVRSIKKEILSIYIRTTVGHISIYREIEEAIQGFCQAC</sequence>
<keyword id="KW-0150">Chloroplast</keyword>
<keyword id="KW-0240">DNA-directed RNA polymerase</keyword>
<keyword id="KW-0460">Magnesium</keyword>
<keyword id="KW-0479">Metal-binding</keyword>
<keyword id="KW-0548">Nucleotidyltransferase</keyword>
<keyword id="KW-0934">Plastid</keyword>
<keyword id="KW-0804">Transcription</keyword>
<keyword id="KW-0808">Transferase</keyword>
<keyword id="KW-0862">Zinc</keyword>
<dbReference type="EC" id="2.7.7.6" evidence="1"/>
<dbReference type="EMBL" id="DQ898156">
    <property type="protein sequence ID" value="ABI32415.1"/>
    <property type="status" value="ALT_INIT"/>
    <property type="molecule type" value="Genomic_DNA"/>
</dbReference>
<dbReference type="RefSeq" id="YP_740108.1">
    <property type="nucleotide sequence ID" value="NC_008325.1"/>
</dbReference>
<dbReference type="SMR" id="Q0G9X1"/>
<dbReference type="GeneID" id="4266718"/>
<dbReference type="GO" id="GO:0009507">
    <property type="term" value="C:chloroplast"/>
    <property type="evidence" value="ECO:0007669"/>
    <property type="project" value="UniProtKB-SubCell"/>
</dbReference>
<dbReference type="GO" id="GO:0000428">
    <property type="term" value="C:DNA-directed RNA polymerase complex"/>
    <property type="evidence" value="ECO:0007669"/>
    <property type="project" value="UniProtKB-KW"/>
</dbReference>
<dbReference type="GO" id="GO:0005739">
    <property type="term" value="C:mitochondrion"/>
    <property type="evidence" value="ECO:0007669"/>
    <property type="project" value="GOC"/>
</dbReference>
<dbReference type="GO" id="GO:0003677">
    <property type="term" value="F:DNA binding"/>
    <property type="evidence" value="ECO:0007669"/>
    <property type="project" value="UniProtKB-UniRule"/>
</dbReference>
<dbReference type="GO" id="GO:0003899">
    <property type="term" value="F:DNA-directed RNA polymerase activity"/>
    <property type="evidence" value="ECO:0007669"/>
    <property type="project" value="UniProtKB-UniRule"/>
</dbReference>
<dbReference type="GO" id="GO:0000287">
    <property type="term" value="F:magnesium ion binding"/>
    <property type="evidence" value="ECO:0007669"/>
    <property type="project" value="UniProtKB-UniRule"/>
</dbReference>
<dbReference type="GO" id="GO:0008270">
    <property type="term" value="F:zinc ion binding"/>
    <property type="evidence" value="ECO:0007669"/>
    <property type="project" value="UniProtKB-UniRule"/>
</dbReference>
<dbReference type="GO" id="GO:0006351">
    <property type="term" value="P:DNA-templated transcription"/>
    <property type="evidence" value="ECO:0007669"/>
    <property type="project" value="UniProtKB-UniRule"/>
</dbReference>
<dbReference type="FunFam" id="4.10.860.120:FF:000007">
    <property type="entry name" value="DNA-directed RNA polymerase subunit gamma"/>
    <property type="match status" value="1"/>
</dbReference>
<dbReference type="Gene3D" id="1.10.40.90">
    <property type="match status" value="1"/>
</dbReference>
<dbReference type="Gene3D" id="2.40.40.20">
    <property type="match status" value="1"/>
</dbReference>
<dbReference type="Gene3D" id="4.10.860.120">
    <property type="entry name" value="RNA polymerase II, clamp domain"/>
    <property type="match status" value="1"/>
</dbReference>
<dbReference type="Gene3D" id="1.10.274.100">
    <property type="entry name" value="RNA polymerase Rpb1, domain 3"/>
    <property type="match status" value="1"/>
</dbReference>
<dbReference type="HAMAP" id="MF_01323">
    <property type="entry name" value="RNApol_bact_RpoC1"/>
    <property type="match status" value="1"/>
</dbReference>
<dbReference type="InterPro" id="IPR045867">
    <property type="entry name" value="DNA-dir_RpoC_beta_prime"/>
</dbReference>
<dbReference type="InterPro" id="IPR000722">
    <property type="entry name" value="RNA_pol_asu"/>
</dbReference>
<dbReference type="InterPro" id="IPR006592">
    <property type="entry name" value="RNA_pol_N"/>
</dbReference>
<dbReference type="InterPro" id="IPR007080">
    <property type="entry name" value="RNA_pol_Rpb1_1"/>
</dbReference>
<dbReference type="InterPro" id="IPR042102">
    <property type="entry name" value="RNA_pol_Rpb1_3_sf"/>
</dbReference>
<dbReference type="InterPro" id="IPR044893">
    <property type="entry name" value="RNA_pol_Rpb1_clamp_domain"/>
</dbReference>
<dbReference type="InterPro" id="IPR034678">
    <property type="entry name" value="RNApol_RpoC1"/>
</dbReference>
<dbReference type="PANTHER" id="PTHR19376">
    <property type="entry name" value="DNA-DIRECTED RNA POLYMERASE"/>
    <property type="match status" value="1"/>
</dbReference>
<dbReference type="PANTHER" id="PTHR19376:SF54">
    <property type="entry name" value="DNA-DIRECTED RNA POLYMERASE SUBUNIT BETA"/>
    <property type="match status" value="1"/>
</dbReference>
<dbReference type="Pfam" id="PF04997">
    <property type="entry name" value="RNA_pol_Rpb1_1"/>
    <property type="match status" value="2"/>
</dbReference>
<dbReference type="Pfam" id="PF00623">
    <property type="entry name" value="RNA_pol_Rpb1_2"/>
    <property type="match status" value="2"/>
</dbReference>
<dbReference type="SMART" id="SM00663">
    <property type="entry name" value="RPOLA_N"/>
    <property type="match status" value="1"/>
</dbReference>
<dbReference type="SUPFAM" id="SSF64484">
    <property type="entry name" value="beta and beta-prime subunits of DNA dependent RNA-polymerase"/>
    <property type="match status" value="1"/>
</dbReference>